<feature type="chain" id="PRO_0000353620" description="Large ribosomal subunit protein uL3">
    <location>
        <begin position="1"/>
        <end position="215"/>
    </location>
</feature>
<feature type="modified residue" description="N5-methylglutamine" evidence="1">
    <location>
        <position position="156"/>
    </location>
</feature>
<accession>B2I8G9</accession>
<comment type="function">
    <text evidence="1">One of the primary rRNA binding proteins, it binds directly near the 3'-end of the 23S rRNA, where it nucleates assembly of the 50S subunit.</text>
</comment>
<comment type="subunit">
    <text evidence="1">Part of the 50S ribosomal subunit. Forms a cluster with proteins L14 and L19.</text>
</comment>
<comment type="PTM">
    <text evidence="1">Methylated by PrmB.</text>
</comment>
<comment type="similarity">
    <text evidence="1">Belongs to the universal ribosomal protein uL3 family.</text>
</comment>
<comment type="sequence caution" evidence="2">
    <conflict type="erroneous initiation">
        <sequence resource="EMBL-CDS" id="ACB91880"/>
    </conflict>
</comment>
<dbReference type="EMBL" id="CP001011">
    <property type="protein sequence ID" value="ACB91880.1"/>
    <property type="status" value="ALT_INIT"/>
    <property type="molecule type" value="Genomic_DNA"/>
</dbReference>
<dbReference type="RefSeq" id="WP_004090088.1">
    <property type="nucleotide sequence ID" value="NC_010577.1"/>
</dbReference>
<dbReference type="SMR" id="B2I8G9"/>
<dbReference type="KEGG" id="xfn:XfasM23_0433"/>
<dbReference type="HOGENOM" id="CLU_044142_4_1_6"/>
<dbReference type="Proteomes" id="UP000001698">
    <property type="component" value="Chromosome"/>
</dbReference>
<dbReference type="GO" id="GO:0022625">
    <property type="term" value="C:cytosolic large ribosomal subunit"/>
    <property type="evidence" value="ECO:0007669"/>
    <property type="project" value="TreeGrafter"/>
</dbReference>
<dbReference type="GO" id="GO:0019843">
    <property type="term" value="F:rRNA binding"/>
    <property type="evidence" value="ECO:0007669"/>
    <property type="project" value="UniProtKB-UniRule"/>
</dbReference>
<dbReference type="GO" id="GO:0003735">
    <property type="term" value="F:structural constituent of ribosome"/>
    <property type="evidence" value="ECO:0007669"/>
    <property type="project" value="InterPro"/>
</dbReference>
<dbReference type="GO" id="GO:0006412">
    <property type="term" value="P:translation"/>
    <property type="evidence" value="ECO:0007669"/>
    <property type="project" value="UniProtKB-UniRule"/>
</dbReference>
<dbReference type="FunFam" id="2.40.30.10:FF:000004">
    <property type="entry name" value="50S ribosomal protein L3"/>
    <property type="match status" value="1"/>
</dbReference>
<dbReference type="FunFam" id="3.30.160.810:FF:000001">
    <property type="entry name" value="50S ribosomal protein L3"/>
    <property type="match status" value="1"/>
</dbReference>
<dbReference type="Gene3D" id="3.30.160.810">
    <property type="match status" value="1"/>
</dbReference>
<dbReference type="Gene3D" id="2.40.30.10">
    <property type="entry name" value="Translation factors"/>
    <property type="match status" value="1"/>
</dbReference>
<dbReference type="HAMAP" id="MF_01325_B">
    <property type="entry name" value="Ribosomal_uL3_B"/>
    <property type="match status" value="1"/>
</dbReference>
<dbReference type="InterPro" id="IPR000597">
    <property type="entry name" value="Ribosomal_uL3"/>
</dbReference>
<dbReference type="InterPro" id="IPR019927">
    <property type="entry name" value="Ribosomal_uL3_bac/org-type"/>
</dbReference>
<dbReference type="InterPro" id="IPR019926">
    <property type="entry name" value="Ribosomal_uL3_CS"/>
</dbReference>
<dbReference type="InterPro" id="IPR009000">
    <property type="entry name" value="Transl_B-barrel_sf"/>
</dbReference>
<dbReference type="NCBIfam" id="TIGR03625">
    <property type="entry name" value="L3_bact"/>
    <property type="match status" value="1"/>
</dbReference>
<dbReference type="PANTHER" id="PTHR11229">
    <property type="entry name" value="50S RIBOSOMAL PROTEIN L3"/>
    <property type="match status" value="1"/>
</dbReference>
<dbReference type="PANTHER" id="PTHR11229:SF16">
    <property type="entry name" value="LARGE RIBOSOMAL SUBUNIT PROTEIN UL3C"/>
    <property type="match status" value="1"/>
</dbReference>
<dbReference type="Pfam" id="PF00297">
    <property type="entry name" value="Ribosomal_L3"/>
    <property type="match status" value="1"/>
</dbReference>
<dbReference type="SUPFAM" id="SSF50447">
    <property type="entry name" value="Translation proteins"/>
    <property type="match status" value="1"/>
</dbReference>
<dbReference type="PROSITE" id="PS00474">
    <property type="entry name" value="RIBOSOMAL_L3"/>
    <property type="match status" value="1"/>
</dbReference>
<proteinExistence type="inferred from homology"/>
<organism>
    <name type="scientific">Xylella fastidiosa (strain M23)</name>
    <dbReference type="NCBI Taxonomy" id="405441"/>
    <lineage>
        <taxon>Bacteria</taxon>
        <taxon>Pseudomonadati</taxon>
        <taxon>Pseudomonadota</taxon>
        <taxon>Gammaproteobacteria</taxon>
        <taxon>Lysobacterales</taxon>
        <taxon>Lysobacteraceae</taxon>
        <taxon>Xylella</taxon>
    </lineage>
</organism>
<reference key="1">
    <citation type="journal article" date="2010" name="J. Bacteriol.">
        <title>Whole genome sequences of two Xylella fastidiosa strains (M12 and M23) causing almond leaf scorch disease in California.</title>
        <authorList>
            <person name="Chen J."/>
            <person name="Xie G."/>
            <person name="Han S."/>
            <person name="Chertkov O."/>
            <person name="Sims D."/>
            <person name="Civerolo E.L."/>
        </authorList>
    </citation>
    <scope>NUCLEOTIDE SEQUENCE [LARGE SCALE GENOMIC DNA]</scope>
    <source>
        <strain>M23</strain>
    </source>
</reference>
<sequence>MGCYSMGFVGRKAGMSRVFLEDGCSIPVTLIEATANRVVQIKTSDVDGYDAVQVTVGSRRSVLVNKPESGHFAKAKVEAGRGLWEFRVEKTQLGSYSVGSEVGLSIFAVGQKVDIQGITKGKGFQGTIKRHNFRMGDATHGNSLSHRAPGSLGQRQTPGRVFPGKKMSGHMGAVKQSVQNLEVIKIDVERCLIAVRGAIPGASGGDVLIRSASKI</sequence>
<evidence type="ECO:0000255" key="1">
    <source>
        <dbReference type="HAMAP-Rule" id="MF_01325"/>
    </source>
</evidence>
<evidence type="ECO:0000305" key="2"/>
<protein>
    <recommendedName>
        <fullName evidence="1">Large ribosomal subunit protein uL3</fullName>
    </recommendedName>
    <alternativeName>
        <fullName evidence="2">50S ribosomal protein L3</fullName>
    </alternativeName>
</protein>
<keyword id="KW-0488">Methylation</keyword>
<keyword id="KW-0687">Ribonucleoprotein</keyword>
<keyword id="KW-0689">Ribosomal protein</keyword>
<keyword id="KW-0694">RNA-binding</keyword>
<keyword id="KW-0699">rRNA-binding</keyword>
<name>RL3_XYLF2</name>
<gene>
    <name evidence="1" type="primary">rplC</name>
    <name type="ordered locus">XfasM23_0433</name>
</gene>